<proteinExistence type="inferred from homology"/>
<organism>
    <name type="scientific">Streptococcus uberis (strain ATCC BAA-854 / 0140J)</name>
    <dbReference type="NCBI Taxonomy" id="218495"/>
    <lineage>
        <taxon>Bacteria</taxon>
        <taxon>Bacillati</taxon>
        <taxon>Bacillota</taxon>
        <taxon>Bacilli</taxon>
        <taxon>Lactobacillales</taxon>
        <taxon>Streptococcaceae</taxon>
        <taxon>Streptococcus</taxon>
    </lineage>
</organism>
<comment type="function">
    <text evidence="1">Catalyzes the addition and repair of the essential 3'-terminal CCA sequence in tRNAs without using a nucleic acid template. Adds these three nucleotides in the order of C, C, and A to the tRNA nucleotide-73, using CTP and ATP as substrates and producing inorganic pyrophosphate. tRNA 3'-terminal CCA addition is required both for tRNA processing and repair. Also involved in tRNA surveillance by mediating tandem CCA addition to generate a CCACCA at the 3' terminus of unstable tRNAs. While stable tRNAs receive only 3'-terminal CCA, unstable tRNAs are marked with CCACCA and rapidly degraded.</text>
</comment>
<comment type="catalytic activity">
    <reaction evidence="1">
        <text>a tRNA precursor + 2 CTP + ATP = a tRNA with a 3' CCA end + 3 diphosphate</text>
        <dbReference type="Rhea" id="RHEA:14433"/>
        <dbReference type="Rhea" id="RHEA-COMP:10465"/>
        <dbReference type="Rhea" id="RHEA-COMP:10468"/>
        <dbReference type="ChEBI" id="CHEBI:30616"/>
        <dbReference type="ChEBI" id="CHEBI:33019"/>
        <dbReference type="ChEBI" id="CHEBI:37563"/>
        <dbReference type="ChEBI" id="CHEBI:74896"/>
        <dbReference type="ChEBI" id="CHEBI:83071"/>
        <dbReference type="EC" id="2.7.7.72"/>
    </reaction>
</comment>
<comment type="catalytic activity">
    <reaction evidence="1">
        <text>a tRNA with a 3' CCA end + 2 CTP + ATP = a tRNA with a 3' CCACCA end + 3 diphosphate</text>
        <dbReference type="Rhea" id="RHEA:76235"/>
        <dbReference type="Rhea" id="RHEA-COMP:10468"/>
        <dbReference type="Rhea" id="RHEA-COMP:18655"/>
        <dbReference type="ChEBI" id="CHEBI:30616"/>
        <dbReference type="ChEBI" id="CHEBI:33019"/>
        <dbReference type="ChEBI" id="CHEBI:37563"/>
        <dbReference type="ChEBI" id="CHEBI:83071"/>
        <dbReference type="ChEBI" id="CHEBI:195187"/>
    </reaction>
    <physiologicalReaction direction="left-to-right" evidence="1">
        <dbReference type="Rhea" id="RHEA:76236"/>
    </physiologicalReaction>
</comment>
<comment type="cofactor">
    <cofactor evidence="1">
        <name>Mg(2+)</name>
        <dbReference type="ChEBI" id="CHEBI:18420"/>
    </cofactor>
</comment>
<comment type="subunit">
    <text evidence="1">Homodimer.</text>
</comment>
<comment type="miscellaneous">
    <text evidence="1">A single active site specifically recognizes both ATP and CTP and is responsible for their addition.</text>
</comment>
<comment type="similarity">
    <text evidence="1">Belongs to the tRNA nucleotidyltransferase/poly(A) polymerase family. Bacterial CCA-adding enzyme type 3 subfamily.</text>
</comment>
<keyword id="KW-0067">ATP-binding</keyword>
<keyword id="KW-0460">Magnesium</keyword>
<keyword id="KW-0479">Metal-binding</keyword>
<keyword id="KW-0547">Nucleotide-binding</keyword>
<keyword id="KW-0548">Nucleotidyltransferase</keyword>
<keyword id="KW-1185">Reference proteome</keyword>
<keyword id="KW-0692">RNA repair</keyword>
<keyword id="KW-0694">RNA-binding</keyword>
<keyword id="KW-0808">Transferase</keyword>
<keyword id="KW-0819">tRNA processing</keyword>
<evidence type="ECO:0000255" key="1">
    <source>
        <dbReference type="HAMAP-Rule" id="MF_01263"/>
    </source>
</evidence>
<gene>
    <name evidence="1" type="primary">cca</name>
    <name type="ordered locus">SUB0757</name>
</gene>
<reference key="1">
    <citation type="journal article" date="2009" name="BMC Genomics">
        <title>Evidence for niche adaptation in the genome of the bovine pathogen Streptococcus uberis.</title>
        <authorList>
            <person name="Ward P.N."/>
            <person name="Holden M.T.G."/>
            <person name="Leigh J.A."/>
            <person name="Lennard N."/>
            <person name="Bignell A."/>
            <person name="Barron A."/>
            <person name="Clark L."/>
            <person name="Quail M.A."/>
            <person name="Woodward J."/>
            <person name="Barrell B.G."/>
            <person name="Egan S.A."/>
            <person name="Field T.R."/>
            <person name="Maskell D."/>
            <person name="Kehoe M."/>
            <person name="Dowson C.G."/>
            <person name="Chanter N."/>
            <person name="Whatmore A.M."/>
            <person name="Bentley S.D."/>
            <person name="Parkhill J."/>
        </authorList>
    </citation>
    <scope>NUCLEOTIDE SEQUENCE [LARGE SCALE GENOMIC DNA]</scope>
    <source>
        <strain>ATCC BAA-854 / 0140J</strain>
    </source>
</reference>
<feature type="chain" id="PRO_1000165135" description="CCA-adding enzyme">
    <location>
        <begin position="1"/>
        <end position="403"/>
    </location>
</feature>
<feature type="binding site" evidence="1">
    <location>
        <position position="32"/>
    </location>
    <ligand>
        <name>ATP</name>
        <dbReference type="ChEBI" id="CHEBI:30616"/>
    </ligand>
</feature>
<feature type="binding site" evidence="1">
    <location>
        <position position="32"/>
    </location>
    <ligand>
        <name>CTP</name>
        <dbReference type="ChEBI" id="CHEBI:37563"/>
    </ligand>
</feature>
<feature type="binding site" evidence="1">
    <location>
        <position position="35"/>
    </location>
    <ligand>
        <name>ATP</name>
        <dbReference type="ChEBI" id="CHEBI:30616"/>
    </ligand>
</feature>
<feature type="binding site" evidence="1">
    <location>
        <position position="35"/>
    </location>
    <ligand>
        <name>CTP</name>
        <dbReference type="ChEBI" id="CHEBI:37563"/>
    </ligand>
</feature>
<feature type="binding site" evidence="1">
    <location>
        <position position="45"/>
    </location>
    <ligand>
        <name>Mg(2+)</name>
        <dbReference type="ChEBI" id="CHEBI:18420"/>
    </ligand>
</feature>
<feature type="binding site" evidence="1">
    <location>
        <position position="47"/>
    </location>
    <ligand>
        <name>Mg(2+)</name>
        <dbReference type="ChEBI" id="CHEBI:18420"/>
    </ligand>
</feature>
<feature type="binding site" evidence="1">
    <location>
        <position position="116"/>
    </location>
    <ligand>
        <name>ATP</name>
        <dbReference type="ChEBI" id="CHEBI:30616"/>
    </ligand>
</feature>
<feature type="binding site" evidence="1">
    <location>
        <position position="116"/>
    </location>
    <ligand>
        <name>CTP</name>
        <dbReference type="ChEBI" id="CHEBI:37563"/>
    </ligand>
</feature>
<feature type="binding site" evidence="1">
    <location>
        <position position="159"/>
    </location>
    <ligand>
        <name>ATP</name>
        <dbReference type="ChEBI" id="CHEBI:30616"/>
    </ligand>
</feature>
<feature type="binding site" evidence="1">
    <location>
        <position position="159"/>
    </location>
    <ligand>
        <name>CTP</name>
        <dbReference type="ChEBI" id="CHEBI:37563"/>
    </ligand>
</feature>
<feature type="binding site" evidence="1">
    <location>
        <position position="162"/>
    </location>
    <ligand>
        <name>ATP</name>
        <dbReference type="ChEBI" id="CHEBI:30616"/>
    </ligand>
</feature>
<feature type="binding site" evidence="1">
    <location>
        <position position="162"/>
    </location>
    <ligand>
        <name>CTP</name>
        <dbReference type="ChEBI" id="CHEBI:37563"/>
    </ligand>
</feature>
<feature type="binding site" evidence="1">
    <location>
        <position position="165"/>
    </location>
    <ligand>
        <name>ATP</name>
        <dbReference type="ChEBI" id="CHEBI:30616"/>
    </ligand>
</feature>
<feature type="binding site" evidence="1">
    <location>
        <position position="165"/>
    </location>
    <ligand>
        <name>CTP</name>
        <dbReference type="ChEBI" id="CHEBI:37563"/>
    </ligand>
</feature>
<feature type="binding site" evidence="1">
    <location>
        <position position="168"/>
    </location>
    <ligand>
        <name>ATP</name>
        <dbReference type="ChEBI" id="CHEBI:30616"/>
    </ligand>
</feature>
<feature type="binding site" evidence="1">
    <location>
        <position position="168"/>
    </location>
    <ligand>
        <name>CTP</name>
        <dbReference type="ChEBI" id="CHEBI:37563"/>
    </ligand>
</feature>
<dbReference type="EC" id="2.7.7.72" evidence="1"/>
<dbReference type="EMBL" id="AM946015">
    <property type="protein sequence ID" value="CAR41700.1"/>
    <property type="molecule type" value="Genomic_DNA"/>
</dbReference>
<dbReference type="RefSeq" id="WP_012658274.1">
    <property type="nucleotide sequence ID" value="NC_012004.1"/>
</dbReference>
<dbReference type="SMR" id="B9DRX9"/>
<dbReference type="STRING" id="218495.SUB0757"/>
<dbReference type="KEGG" id="sub:SUB0757"/>
<dbReference type="eggNOG" id="COG0617">
    <property type="taxonomic scope" value="Bacteria"/>
</dbReference>
<dbReference type="HOGENOM" id="CLU_015961_3_0_9"/>
<dbReference type="OrthoDB" id="9805698at2"/>
<dbReference type="Proteomes" id="UP000000449">
    <property type="component" value="Chromosome"/>
</dbReference>
<dbReference type="GO" id="GO:0005524">
    <property type="term" value="F:ATP binding"/>
    <property type="evidence" value="ECO:0007669"/>
    <property type="project" value="UniProtKB-UniRule"/>
</dbReference>
<dbReference type="GO" id="GO:0004810">
    <property type="term" value="F:CCA tRNA nucleotidyltransferase activity"/>
    <property type="evidence" value="ECO:0007669"/>
    <property type="project" value="UniProtKB-UniRule"/>
</dbReference>
<dbReference type="GO" id="GO:0000287">
    <property type="term" value="F:magnesium ion binding"/>
    <property type="evidence" value="ECO:0007669"/>
    <property type="project" value="UniProtKB-UniRule"/>
</dbReference>
<dbReference type="GO" id="GO:0000049">
    <property type="term" value="F:tRNA binding"/>
    <property type="evidence" value="ECO:0007669"/>
    <property type="project" value="UniProtKB-UniRule"/>
</dbReference>
<dbReference type="GO" id="GO:0042245">
    <property type="term" value="P:RNA repair"/>
    <property type="evidence" value="ECO:0007669"/>
    <property type="project" value="UniProtKB-KW"/>
</dbReference>
<dbReference type="GO" id="GO:0001680">
    <property type="term" value="P:tRNA 3'-terminal CCA addition"/>
    <property type="evidence" value="ECO:0007669"/>
    <property type="project" value="UniProtKB-UniRule"/>
</dbReference>
<dbReference type="CDD" id="cd05398">
    <property type="entry name" value="NT_ClassII-CCAase"/>
    <property type="match status" value="1"/>
</dbReference>
<dbReference type="Gene3D" id="1.10.110.30">
    <property type="match status" value="1"/>
</dbReference>
<dbReference type="Gene3D" id="1.10.246.80">
    <property type="match status" value="1"/>
</dbReference>
<dbReference type="Gene3D" id="1.20.58.560">
    <property type="match status" value="1"/>
</dbReference>
<dbReference type="Gene3D" id="3.30.460.10">
    <property type="entry name" value="Beta Polymerase, domain 2"/>
    <property type="match status" value="1"/>
</dbReference>
<dbReference type="HAMAP" id="MF_01263">
    <property type="entry name" value="CCA_bact_type3"/>
    <property type="match status" value="1"/>
</dbReference>
<dbReference type="InterPro" id="IPR050264">
    <property type="entry name" value="Bact_CCA-adding_enz_type3_sf"/>
</dbReference>
<dbReference type="InterPro" id="IPR032810">
    <property type="entry name" value="CCA-adding_enz_C"/>
</dbReference>
<dbReference type="InterPro" id="IPR023068">
    <property type="entry name" value="CCA-adding_enz_firmicutes"/>
</dbReference>
<dbReference type="InterPro" id="IPR043519">
    <property type="entry name" value="NT_sf"/>
</dbReference>
<dbReference type="InterPro" id="IPR002646">
    <property type="entry name" value="PolA_pol_head_dom"/>
</dbReference>
<dbReference type="InterPro" id="IPR032828">
    <property type="entry name" value="PolyA_RNA-bd"/>
</dbReference>
<dbReference type="NCBIfam" id="NF009814">
    <property type="entry name" value="PRK13299.1"/>
    <property type="match status" value="1"/>
</dbReference>
<dbReference type="PANTHER" id="PTHR46173">
    <property type="entry name" value="CCA TRNA NUCLEOTIDYLTRANSFERASE 1, MITOCHONDRIAL"/>
    <property type="match status" value="1"/>
</dbReference>
<dbReference type="PANTHER" id="PTHR46173:SF1">
    <property type="entry name" value="CCA TRNA NUCLEOTIDYLTRANSFERASE 1, MITOCHONDRIAL"/>
    <property type="match status" value="1"/>
</dbReference>
<dbReference type="Pfam" id="PF01743">
    <property type="entry name" value="PolyA_pol"/>
    <property type="match status" value="1"/>
</dbReference>
<dbReference type="Pfam" id="PF12627">
    <property type="entry name" value="PolyA_pol_RNAbd"/>
    <property type="match status" value="1"/>
</dbReference>
<dbReference type="Pfam" id="PF13735">
    <property type="entry name" value="tRNA_NucTran2_2"/>
    <property type="match status" value="1"/>
</dbReference>
<dbReference type="SUPFAM" id="SSF81301">
    <property type="entry name" value="Nucleotidyltransferase"/>
    <property type="match status" value="1"/>
</dbReference>
<dbReference type="SUPFAM" id="SSF81891">
    <property type="entry name" value="Poly A polymerase C-terminal region-like"/>
    <property type="match status" value="1"/>
</dbReference>
<name>CCA_STRU0</name>
<protein>
    <recommendedName>
        <fullName evidence="1">CCA-adding enzyme</fullName>
        <ecNumber evidence="1">2.7.7.72</ecNumber>
    </recommendedName>
    <alternativeName>
        <fullName evidence="1">CCA tRNA nucleotidyltransferase</fullName>
    </alternativeName>
    <alternativeName>
        <fullName evidence="1">tRNA CCA-pyrophosphorylase</fullName>
    </alternativeName>
    <alternativeName>
        <fullName evidence="1">tRNA adenylyl-/cytidylyl- transferase</fullName>
    </alternativeName>
    <alternativeName>
        <fullName evidence="1">tRNA nucleotidyltransferase</fullName>
    </alternativeName>
    <alternativeName>
        <fullName evidence="1">tRNA-NT</fullName>
    </alternativeName>
</protein>
<accession>B9DRX9</accession>
<sequence>MKLMKLPSEFQKALPILKKIKEAGFEAYFVGGGVRDILLDRPIHDVDIATSSYPEETKAIFSRTVDIGIEHGTVLVLENDAEYEITTFRTEDIYVDYRRPSNVSFVRSLEEDLKRRDFTVNALALDETGQVIDKFHGLQDLKRKELRAVGKAEERFQEDALRIMRGFRFAASLDFKIEDETFEAMKTHAHLLQKISVERSFIELDKLFMAPNWKLGLTYFIEAQAYNYLPGLENRQSELTGMMDHFDAHFVFDSSEQAWANMIIALSLDKEKAFLKSWKTSNDFQKQVTQIVTLYRKRESALLSKMDLYMYGKEAAILSENLRKAKGLPTDFNHMMRTYDDLTIYDKHEIVVNGRYLMEKLNMKAGPQLGHLLKKVEKAIVEGTLANKVGDIEAFIMKELENE</sequence>